<protein>
    <recommendedName>
        <fullName evidence="1">Translation initiation factor IF-1, chloroplastic</fullName>
    </recommendedName>
</protein>
<comment type="function">
    <text evidence="1">One of the essential components for the initiation of protein synthesis. Stabilizes the binding of IF-2 and IF-3 on the 30S subunit to which N-formylmethionyl-tRNA(fMet) subsequently binds. Helps modulate mRNA selection, yielding the 30S pre-initiation complex (PIC). Upon addition of the 50S ribosomal subunit IF-1, IF-2 and IF-3 are released leaving the mature 70S translation initiation complex.</text>
</comment>
<comment type="subunit">
    <text evidence="1">Component of the 30S ribosomal translation pre-initiation complex which assembles on the 30S ribosome in the order IF-2 and IF-3, IF-1 and N-formylmethionyl-tRNA(fMet); mRNA recruitment can occur at any time during PIC assembly.</text>
</comment>
<comment type="subcellular location">
    <subcellularLocation>
        <location evidence="1">Plastid</location>
        <location evidence="1">Chloroplast</location>
    </subcellularLocation>
</comment>
<comment type="similarity">
    <text evidence="1">Belongs to the IF-1 family.</text>
</comment>
<sequence>MKRQKWIHEGLITESPSNGMFRVRLDNXDLIPSYVSGKIRRSLIRILPGDKVKIEVSRYDSTRGRIIYRLRNKDSKD</sequence>
<gene>
    <name evidence="1" type="primary">infA</name>
</gene>
<name>IF1C_LEUFR</name>
<dbReference type="EMBL" id="AF347662">
    <property type="protein sequence ID" value="AAK38867.1"/>
    <property type="molecule type" value="Genomic_DNA"/>
</dbReference>
<dbReference type="GO" id="GO:0009507">
    <property type="term" value="C:chloroplast"/>
    <property type="evidence" value="ECO:0007669"/>
    <property type="project" value="UniProtKB-SubCell"/>
</dbReference>
<dbReference type="GO" id="GO:0005829">
    <property type="term" value="C:cytosol"/>
    <property type="evidence" value="ECO:0007669"/>
    <property type="project" value="TreeGrafter"/>
</dbReference>
<dbReference type="GO" id="GO:0043022">
    <property type="term" value="F:ribosome binding"/>
    <property type="evidence" value="ECO:0007669"/>
    <property type="project" value="UniProtKB-UniRule"/>
</dbReference>
<dbReference type="GO" id="GO:0019843">
    <property type="term" value="F:rRNA binding"/>
    <property type="evidence" value="ECO:0007669"/>
    <property type="project" value="UniProtKB-UniRule"/>
</dbReference>
<dbReference type="GO" id="GO:0003743">
    <property type="term" value="F:translation initiation factor activity"/>
    <property type="evidence" value="ECO:0007669"/>
    <property type="project" value="UniProtKB-UniRule"/>
</dbReference>
<dbReference type="CDD" id="cd04451">
    <property type="entry name" value="S1_IF1"/>
    <property type="match status" value="1"/>
</dbReference>
<dbReference type="Gene3D" id="2.40.50.140">
    <property type="entry name" value="Nucleic acid-binding proteins"/>
    <property type="match status" value="1"/>
</dbReference>
<dbReference type="HAMAP" id="MF_00075">
    <property type="entry name" value="IF_1"/>
    <property type="match status" value="1"/>
</dbReference>
<dbReference type="InterPro" id="IPR012340">
    <property type="entry name" value="NA-bd_OB-fold"/>
</dbReference>
<dbReference type="InterPro" id="IPR006196">
    <property type="entry name" value="RNA-binding_domain_S1_IF1"/>
</dbReference>
<dbReference type="InterPro" id="IPR004368">
    <property type="entry name" value="TIF_IF1"/>
</dbReference>
<dbReference type="NCBIfam" id="TIGR00008">
    <property type="entry name" value="infA"/>
    <property type="match status" value="1"/>
</dbReference>
<dbReference type="PANTHER" id="PTHR33370">
    <property type="entry name" value="TRANSLATION INITIATION FACTOR IF-1, CHLOROPLASTIC"/>
    <property type="match status" value="1"/>
</dbReference>
<dbReference type="PANTHER" id="PTHR33370:SF1">
    <property type="entry name" value="TRANSLATION INITIATION FACTOR IF-1, CHLOROPLASTIC"/>
    <property type="match status" value="1"/>
</dbReference>
<dbReference type="Pfam" id="PF01176">
    <property type="entry name" value="eIF-1a"/>
    <property type="match status" value="1"/>
</dbReference>
<dbReference type="SUPFAM" id="SSF50249">
    <property type="entry name" value="Nucleic acid-binding proteins"/>
    <property type="match status" value="1"/>
</dbReference>
<dbReference type="PROSITE" id="PS50832">
    <property type="entry name" value="S1_IF1_TYPE"/>
    <property type="match status" value="1"/>
</dbReference>
<organism>
    <name type="scientific">Leucophyllum frutescens</name>
    <name type="common">Texas ranger</name>
    <name type="synonym">Terania frutescens</name>
    <dbReference type="NCBI Taxonomy" id="86643"/>
    <lineage>
        <taxon>Eukaryota</taxon>
        <taxon>Viridiplantae</taxon>
        <taxon>Streptophyta</taxon>
        <taxon>Embryophyta</taxon>
        <taxon>Tracheophyta</taxon>
        <taxon>Spermatophyta</taxon>
        <taxon>Magnoliopsida</taxon>
        <taxon>eudicotyledons</taxon>
        <taxon>Gunneridae</taxon>
        <taxon>Pentapetalae</taxon>
        <taxon>asterids</taxon>
        <taxon>lamiids</taxon>
        <taxon>Lamiales</taxon>
        <taxon>Scrophulariaceae</taxon>
        <taxon>Leucophylleae</taxon>
        <taxon>Leucophyllum</taxon>
    </lineage>
</organism>
<feature type="chain" id="PRO_0000095935" description="Translation initiation factor IF-1, chloroplastic">
    <location>
        <begin position="1"/>
        <end position="77"/>
    </location>
</feature>
<feature type="domain" description="S1-like" evidence="1">
    <location>
        <begin position="1"/>
        <end position="71"/>
    </location>
</feature>
<proteinExistence type="inferred from homology"/>
<accession>Q95GM2</accession>
<reference key="1">
    <citation type="journal article" date="2001" name="Plant Cell">
        <title>Many parallel losses of infA from chloroplast DNA during angiosperm evolution with multiple independent transfers to the nucleus.</title>
        <authorList>
            <person name="Millen R.S."/>
            <person name="Olmstead R.G."/>
            <person name="Adams K.L."/>
            <person name="Palmer J.D."/>
            <person name="Lao N.T."/>
            <person name="Heggie L."/>
            <person name="Kavanagh T.A."/>
            <person name="Hibberd J.M."/>
            <person name="Gray J.C."/>
            <person name="Morden C.W."/>
            <person name="Calie P.J."/>
            <person name="Jermiin L.S."/>
            <person name="Wolfe K.H."/>
        </authorList>
    </citation>
    <scope>NUCLEOTIDE SEQUENCE [GENOMIC DNA]</scope>
</reference>
<evidence type="ECO:0000255" key="1">
    <source>
        <dbReference type="HAMAP-Rule" id="MF_00075"/>
    </source>
</evidence>
<keyword id="KW-0150">Chloroplast</keyword>
<keyword id="KW-0396">Initiation factor</keyword>
<keyword id="KW-0934">Plastid</keyword>
<keyword id="KW-0648">Protein biosynthesis</keyword>
<keyword id="KW-0694">RNA-binding</keyword>
<keyword id="KW-0699">rRNA-binding</keyword>
<geneLocation type="chloroplast"/>